<organism>
    <name type="scientific">Chlamydia muridarum (strain MoPn / Nigg)</name>
    <dbReference type="NCBI Taxonomy" id="243161"/>
    <lineage>
        <taxon>Bacteria</taxon>
        <taxon>Pseudomonadati</taxon>
        <taxon>Chlamydiota</taxon>
        <taxon>Chlamydiia</taxon>
        <taxon>Chlamydiales</taxon>
        <taxon>Chlamydiaceae</taxon>
        <taxon>Chlamydia/Chlamydophila group</taxon>
        <taxon>Chlamydia</taxon>
    </lineage>
</organism>
<gene>
    <name type="primary">rmuC</name>
    <name type="ordered locus">TC_0212</name>
</gene>
<reference key="1">
    <citation type="journal article" date="2000" name="Nucleic Acids Res.">
        <title>Genome sequences of Chlamydia trachomatis MoPn and Chlamydia pneumoniae AR39.</title>
        <authorList>
            <person name="Read T.D."/>
            <person name="Brunham R.C."/>
            <person name="Shen C."/>
            <person name="Gill S.R."/>
            <person name="Heidelberg J.F."/>
            <person name="White O."/>
            <person name="Hickey E.K."/>
            <person name="Peterson J.D."/>
            <person name="Utterback T.R."/>
            <person name="Berry K.J."/>
            <person name="Bass S."/>
            <person name="Linher K.D."/>
            <person name="Weidman J.F."/>
            <person name="Khouri H.M."/>
            <person name="Craven B."/>
            <person name="Bowman C."/>
            <person name="Dodson R.J."/>
            <person name="Gwinn M.L."/>
            <person name="Nelson W.C."/>
            <person name="DeBoy R.T."/>
            <person name="Kolonay J.F."/>
            <person name="McClarty G."/>
            <person name="Salzberg S.L."/>
            <person name="Eisen J.A."/>
            <person name="Fraser C.M."/>
        </authorList>
    </citation>
    <scope>NUCLEOTIDE SEQUENCE [LARGE SCALE GENOMIC DNA]</scope>
    <source>
        <strain>MoPn / Nigg</strain>
    </source>
</reference>
<evidence type="ECO:0000250" key="1"/>
<evidence type="ECO:0000255" key="2"/>
<evidence type="ECO:0000256" key="3">
    <source>
        <dbReference type="SAM" id="MobiDB-lite"/>
    </source>
</evidence>
<evidence type="ECO:0000305" key="4"/>
<keyword id="KW-0175">Coiled coil</keyword>
<keyword id="KW-0233">DNA recombination</keyword>
<sequence length="425" mass="48344">MYIVAISLLSHTIWIQGVFFLFGLALGVISAFKIFTKTLAQKNEVIRNLEHDKAILQMSLDARRNQEQLIEEFSHKLTSVSQAFARDIKTESQEFFSEKTQAIHSVLAPMHNTLSVFKQNLENFETKQAEDRGALREQLSQLLTAEKKLERETQALTNILKHPGSRGRWGEIQLERILEISGMLKYCDYSVQTVDANDSSSRADIVIRLPQNRSLVIDAKTPFSEEYLTDSHADPTDLVKKIKDHIKTLKTKSYWDKFDQSPEFVILFLPGESLFNDAIRCAPELMDYAGQSNVILSSPVTLMALLKTVTYVWKQENLQNQIREIGQLGKDLYQRMHKLFDHFHKVGKHLGQAVHSYNDMSSSLSARVLPILRTFDKLEISSSHNKIEGLSQISTLPHSPKVPCQEPPLSECFSHQDTSSSDPLS</sequence>
<protein>
    <recommendedName>
        <fullName>DNA recombination protein RmuC homolog</fullName>
    </recommendedName>
</protein>
<name>RMUC_CHLMU</name>
<proteinExistence type="inferred from homology"/>
<accession>Q9PL95</accession>
<dbReference type="EMBL" id="AE002160">
    <property type="protein sequence ID" value="AAF39084.1"/>
    <property type="molecule type" value="Genomic_DNA"/>
</dbReference>
<dbReference type="PIR" id="D81728">
    <property type="entry name" value="D81728"/>
</dbReference>
<dbReference type="RefSeq" id="WP_010229834.1">
    <property type="nucleotide sequence ID" value="NZ_CP063055.1"/>
</dbReference>
<dbReference type="SMR" id="Q9PL95"/>
<dbReference type="GeneID" id="1246338"/>
<dbReference type="KEGG" id="cmu:TC_0212"/>
<dbReference type="eggNOG" id="COG1322">
    <property type="taxonomic scope" value="Bacteria"/>
</dbReference>
<dbReference type="HOGENOM" id="CLU_024057_1_1_0"/>
<dbReference type="OrthoDB" id="370725at2"/>
<dbReference type="Proteomes" id="UP000000800">
    <property type="component" value="Chromosome"/>
</dbReference>
<dbReference type="GO" id="GO:0006310">
    <property type="term" value="P:DNA recombination"/>
    <property type="evidence" value="ECO:0007669"/>
    <property type="project" value="UniProtKB-KW"/>
</dbReference>
<dbReference type="InterPro" id="IPR003798">
    <property type="entry name" value="DNA_recombination_RmuC"/>
</dbReference>
<dbReference type="PANTHER" id="PTHR30563">
    <property type="entry name" value="DNA RECOMBINATION PROTEIN RMUC"/>
    <property type="match status" value="1"/>
</dbReference>
<dbReference type="PANTHER" id="PTHR30563:SF0">
    <property type="entry name" value="DNA RECOMBINATION PROTEIN RMUC"/>
    <property type="match status" value="1"/>
</dbReference>
<dbReference type="Pfam" id="PF02646">
    <property type="entry name" value="RmuC"/>
    <property type="match status" value="1"/>
</dbReference>
<feature type="chain" id="PRO_0000202041" description="DNA recombination protein RmuC homolog">
    <location>
        <begin position="1"/>
        <end position="425"/>
    </location>
</feature>
<feature type="region of interest" description="Disordered" evidence="3">
    <location>
        <begin position="392"/>
        <end position="425"/>
    </location>
</feature>
<feature type="coiled-coil region" evidence="2">
    <location>
        <begin position="37"/>
        <end position="66"/>
    </location>
</feature>
<feature type="coiled-coil region" evidence="2">
    <location>
        <begin position="127"/>
        <end position="162"/>
    </location>
</feature>
<feature type="compositionally biased region" description="Polar residues" evidence="3">
    <location>
        <begin position="413"/>
        <end position="425"/>
    </location>
</feature>
<comment type="function">
    <text evidence="1">Involved in DNA recombination.</text>
</comment>
<comment type="similarity">
    <text evidence="4">Belongs to the RmuC family.</text>
</comment>